<name>THIC_BURA4</name>
<dbReference type="EC" id="4.1.99.17" evidence="1"/>
<dbReference type="EMBL" id="CP001025">
    <property type="protein sequence ID" value="ACB63596.1"/>
    <property type="molecule type" value="Genomic_DNA"/>
</dbReference>
<dbReference type="RefSeq" id="WP_012363481.1">
    <property type="nucleotide sequence ID" value="NC_010551.1"/>
</dbReference>
<dbReference type="SMR" id="B1YW60"/>
<dbReference type="KEGG" id="bac:BamMC406_1105"/>
<dbReference type="HOGENOM" id="CLU_013181_2_1_4"/>
<dbReference type="OrthoDB" id="9805897at2"/>
<dbReference type="UniPathway" id="UPA00060"/>
<dbReference type="Proteomes" id="UP000001680">
    <property type="component" value="Chromosome 1"/>
</dbReference>
<dbReference type="GO" id="GO:0005829">
    <property type="term" value="C:cytosol"/>
    <property type="evidence" value="ECO:0007669"/>
    <property type="project" value="TreeGrafter"/>
</dbReference>
<dbReference type="GO" id="GO:0051539">
    <property type="term" value="F:4 iron, 4 sulfur cluster binding"/>
    <property type="evidence" value="ECO:0007669"/>
    <property type="project" value="UniProtKB-KW"/>
</dbReference>
<dbReference type="GO" id="GO:0016830">
    <property type="term" value="F:carbon-carbon lyase activity"/>
    <property type="evidence" value="ECO:0007669"/>
    <property type="project" value="InterPro"/>
</dbReference>
<dbReference type="GO" id="GO:0008270">
    <property type="term" value="F:zinc ion binding"/>
    <property type="evidence" value="ECO:0007669"/>
    <property type="project" value="UniProtKB-UniRule"/>
</dbReference>
<dbReference type="GO" id="GO:0009228">
    <property type="term" value="P:thiamine biosynthetic process"/>
    <property type="evidence" value="ECO:0007669"/>
    <property type="project" value="UniProtKB-KW"/>
</dbReference>
<dbReference type="GO" id="GO:0009229">
    <property type="term" value="P:thiamine diphosphate biosynthetic process"/>
    <property type="evidence" value="ECO:0007669"/>
    <property type="project" value="UniProtKB-UniRule"/>
</dbReference>
<dbReference type="FunFam" id="3.20.20.540:FF:000001">
    <property type="entry name" value="Phosphomethylpyrimidine synthase"/>
    <property type="match status" value="1"/>
</dbReference>
<dbReference type="Gene3D" id="6.10.250.620">
    <property type="match status" value="1"/>
</dbReference>
<dbReference type="Gene3D" id="3.20.20.540">
    <property type="entry name" value="Radical SAM ThiC family, central domain"/>
    <property type="match status" value="1"/>
</dbReference>
<dbReference type="HAMAP" id="MF_00089">
    <property type="entry name" value="ThiC"/>
    <property type="match status" value="1"/>
</dbReference>
<dbReference type="InterPro" id="IPR037509">
    <property type="entry name" value="ThiC"/>
</dbReference>
<dbReference type="InterPro" id="IPR025747">
    <property type="entry name" value="ThiC-associated_dom"/>
</dbReference>
<dbReference type="InterPro" id="IPR038521">
    <property type="entry name" value="ThiC/Bza_core_dom"/>
</dbReference>
<dbReference type="InterPro" id="IPR002817">
    <property type="entry name" value="ThiC/BzaA/B"/>
</dbReference>
<dbReference type="NCBIfam" id="NF006763">
    <property type="entry name" value="PRK09284.1"/>
    <property type="match status" value="1"/>
</dbReference>
<dbReference type="NCBIfam" id="NF009895">
    <property type="entry name" value="PRK13352.1"/>
    <property type="match status" value="1"/>
</dbReference>
<dbReference type="NCBIfam" id="TIGR00190">
    <property type="entry name" value="thiC"/>
    <property type="match status" value="1"/>
</dbReference>
<dbReference type="PANTHER" id="PTHR30557:SF1">
    <property type="entry name" value="PHOSPHOMETHYLPYRIMIDINE SYNTHASE, CHLOROPLASTIC"/>
    <property type="match status" value="1"/>
</dbReference>
<dbReference type="PANTHER" id="PTHR30557">
    <property type="entry name" value="THIAMINE BIOSYNTHESIS PROTEIN THIC"/>
    <property type="match status" value="1"/>
</dbReference>
<dbReference type="Pfam" id="PF13667">
    <property type="entry name" value="ThiC-associated"/>
    <property type="match status" value="1"/>
</dbReference>
<dbReference type="Pfam" id="PF01964">
    <property type="entry name" value="ThiC_Rad_SAM"/>
    <property type="match status" value="1"/>
</dbReference>
<dbReference type="SFLD" id="SFLDF00407">
    <property type="entry name" value="phosphomethylpyrimidine_syntha"/>
    <property type="match status" value="1"/>
</dbReference>
<dbReference type="SFLD" id="SFLDG01114">
    <property type="entry name" value="phosphomethylpyrimidine_syntha"/>
    <property type="match status" value="1"/>
</dbReference>
<dbReference type="SFLD" id="SFLDS00113">
    <property type="entry name" value="Radical_SAM_Phosphomethylpyrim"/>
    <property type="match status" value="1"/>
</dbReference>
<organism>
    <name type="scientific">Burkholderia ambifaria (strain MC40-6)</name>
    <dbReference type="NCBI Taxonomy" id="398577"/>
    <lineage>
        <taxon>Bacteria</taxon>
        <taxon>Pseudomonadati</taxon>
        <taxon>Pseudomonadota</taxon>
        <taxon>Betaproteobacteria</taxon>
        <taxon>Burkholderiales</taxon>
        <taxon>Burkholderiaceae</taxon>
        <taxon>Burkholderia</taxon>
        <taxon>Burkholderia cepacia complex</taxon>
    </lineage>
</organism>
<evidence type="ECO:0000255" key="1">
    <source>
        <dbReference type="HAMAP-Rule" id="MF_00089"/>
    </source>
</evidence>
<keyword id="KW-0004">4Fe-4S</keyword>
<keyword id="KW-0408">Iron</keyword>
<keyword id="KW-0411">Iron-sulfur</keyword>
<keyword id="KW-0456">Lyase</keyword>
<keyword id="KW-0479">Metal-binding</keyword>
<keyword id="KW-0949">S-adenosyl-L-methionine</keyword>
<keyword id="KW-0784">Thiamine biosynthesis</keyword>
<keyword id="KW-0862">Zinc</keyword>
<reference key="1">
    <citation type="submission" date="2008-04" db="EMBL/GenBank/DDBJ databases">
        <title>Complete sequence of chromosome 1 of Burkholderia ambifaria MC40-6.</title>
        <authorList>
            <person name="Copeland A."/>
            <person name="Lucas S."/>
            <person name="Lapidus A."/>
            <person name="Glavina del Rio T."/>
            <person name="Dalin E."/>
            <person name="Tice H."/>
            <person name="Pitluck S."/>
            <person name="Chain P."/>
            <person name="Malfatti S."/>
            <person name="Shin M."/>
            <person name="Vergez L."/>
            <person name="Lang D."/>
            <person name="Schmutz J."/>
            <person name="Larimer F."/>
            <person name="Land M."/>
            <person name="Hauser L."/>
            <person name="Kyrpides N."/>
            <person name="Lykidis A."/>
            <person name="Ramette A."/>
            <person name="Konstantinidis K."/>
            <person name="Tiedje J."/>
            <person name="Richardson P."/>
        </authorList>
    </citation>
    <scope>NUCLEOTIDE SEQUENCE [LARGE SCALE GENOMIC DNA]</scope>
    <source>
        <strain>MC40-6</strain>
    </source>
</reference>
<feature type="chain" id="PRO_1000093191" description="Phosphomethylpyrimidine synthase">
    <location>
        <begin position="1"/>
        <end position="643"/>
    </location>
</feature>
<feature type="binding site" evidence="1">
    <location>
        <position position="248"/>
    </location>
    <ligand>
        <name>substrate</name>
    </ligand>
</feature>
<feature type="binding site" evidence="1">
    <location>
        <position position="277"/>
    </location>
    <ligand>
        <name>substrate</name>
    </ligand>
</feature>
<feature type="binding site" evidence="1">
    <location>
        <position position="306"/>
    </location>
    <ligand>
        <name>substrate</name>
    </ligand>
</feature>
<feature type="binding site" evidence="1">
    <location>
        <position position="342"/>
    </location>
    <ligand>
        <name>substrate</name>
    </ligand>
</feature>
<feature type="binding site" evidence="1">
    <location>
        <begin position="362"/>
        <end position="364"/>
    </location>
    <ligand>
        <name>substrate</name>
    </ligand>
</feature>
<feature type="binding site" evidence="1">
    <location>
        <begin position="403"/>
        <end position="406"/>
    </location>
    <ligand>
        <name>substrate</name>
    </ligand>
</feature>
<feature type="binding site" evidence="1">
    <location>
        <position position="442"/>
    </location>
    <ligand>
        <name>substrate</name>
    </ligand>
</feature>
<feature type="binding site" evidence="1">
    <location>
        <position position="446"/>
    </location>
    <ligand>
        <name>Zn(2+)</name>
        <dbReference type="ChEBI" id="CHEBI:29105"/>
    </ligand>
</feature>
<feature type="binding site" evidence="1">
    <location>
        <position position="469"/>
    </location>
    <ligand>
        <name>substrate</name>
    </ligand>
</feature>
<feature type="binding site" evidence="1">
    <location>
        <position position="510"/>
    </location>
    <ligand>
        <name>Zn(2+)</name>
        <dbReference type="ChEBI" id="CHEBI:29105"/>
    </ligand>
</feature>
<feature type="binding site" evidence="1">
    <location>
        <position position="590"/>
    </location>
    <ligand>
        <name>[4Fe-4S] cluster</name>
        <dbReference type="ChEBI" id="CHEBI:49883"/>
        <note>4Fe-4S-S-AdoMet</note>
    </ligand>
</feature>
<feature type="binding site" evidence="1">
    <location>
        <position position="593"/>
    </location>
    <ligand>
        <name>[4Fe-4S] cluster</name>
        <dbReference type="ChEBI" id="CHEBI:49883"/>
        <note>4Fe-4S-S-AdoMet</note>
    </ligand>
</feature>
<feature type="binding site" evidence="1">
    <location>
        <position position="598"/>
    </location>
    <ligand>
        <name>[4Fe-4S] cluster</name>
        <dbReference type="ChEBI" id="CHEBI:49883"/>
        <note>4Fe-4S-S-AdoMet</note>
    </ligand>
</feature>
<protein>
    <recommendedName>
        <fullName evidence="1">Phosphomethylpyrimidine synthase</fullName>
        <ecNumber evidence="1">4.1.99.17</ecNumber>
    </recommendedName>
    <alternativeName>
        <fullName evidence="1">Hydroxymethylpyrimidine phosphate synthase</fullName>
        <shortName evidence="1">HMP-P synthase</shortName>
        <shortName evidence="1">HMP-phosphate synthase</shortName>
        <shortName evidence="1">HMPP synthase</shortName>
    </alternativeName>
    <alternativeName>
        <fullName evidence="1">Thiamine biosynthesis protein ThiC</fullName>
    </alternativeName>
</protein>
<gene>
    <name evidence="1" type="primary">thiC</name>
    <name type="ordered locus">BamMC406_1105</name>
</gene>
<sequence>MNANPKFLSADAHVDAAAVAPLPNSRKVYVTGSQPDIRVPMREITQADTPTGFGGEKNPPIYVYDTSGPYTDPDAKIDIRAGLPALRQGWIEARGDTEVLDGLSSQYGLERAADPATADLRFPGLHRNPRRAQPGKNVTQMHYARQGIITPEMEYIAIRENQRRAEYIESLKSSGPNGAKLAAMMGRQHPGQAFGAAAFGANALAEITPEFVRDEVARGRAIIPANINHPESEPMIIGRNFLVKINANIGNSAVTSSIGEEVDKMTWAIRWGGDTVMDLSTGKHIHETREWIIRNSPVPIGTVPIYQALEKVNGKAEDLTWEIFRDTLIEQAEQGVDYFTIHAGVRLQYVPLTANRMTGIVSRGGSIMAKWCLAHHKESFLYEHFEEICEIMKAYDVSFSLGDGLRPGSIYDANDEAQLGELKTLGELTQIAWKHDVQVMIEGPGHVPMQLIKENMDLQLDWCKEAPFYTLGPLTTDIAPGYDHITSGIGAAMIGWFGTAMLCYVTPKEHLGLPNKDDVKEGIITYKLAAHAADLAKGHPGAQVRDNALSKARFEFRWEDQFNIGLDPDKAREFHDETLPKDSAKVAHFCSMCGPHFCSMKITQDVREFAAQQGVSETEALKKGMEVKAVEFVKTGAEIYHRQ</sequence>
<proteinExistence type="inferred from homology"/>
<accession>B1YW60</accession>
<comment type="function">
    <text evidence="1">Catalyzes the synthesis of the hydroxymethylpyrimidine phosphate (HMP-P) moiety of thiamine from aminoimidazole ribotide (AIR) in a radical S-adenosyl-L-methionine (SAM)-dependent reaction.</text>
</comment>
<comment type="catalytic activity">
    <reaction evidence="1">
        <text>5-amino-1-(5-phospho-beta-D-ribosyl)imidazole + S-adenosyl-L-methionine = 4-amino-2-methyl-5-(phosphooxymethyl)pyrimidine + CO + 5'-deoxyadenosine + formate + L-methionine + 3 H(+)</text>
        <dbReference type="Rhea" id="RHEA:24840"/>
        <dbReference type="ChEBI" id="CHEBI:15378"/>
        <dbReference type="ChEBI" id="CHEBI:15740"/>
        <dbReference type="ChEBI" id="CHEBI:17245"/>
        <dbReference type="ChEBI" id="CHEBI:17319"/>
        <dbReference type="ChEBI" id="CHEBI:57844"/>
        <dbReference type="ChEBI" id="CHEBI:58354"/>
        <dbReference type="ChEBI" id="CHEBI:59789"/>
        <dbReference type="ChEBI" id="CHEBI:137981"/>
        <dbReference type="EC" id="4.1.99.17"/>
    </reaction>
</comment>
<comment type="cofactor">
    <cofactor evidence="1">
        <name>[4Fe-4S] cluster</name>
        <dbReference type="ChEBI" id="CHEBI:49883"/>
    </cofactor>
    <text evidence="1">Binds 1 [4Fe-4S] cluster per subunit. The cluster is coordinated with 3 cysteines and an exchangeable S-adenosyl-L-methionine.</text>
</comment>
<comment type="pathway">
    <text evidence="1">Cofactor biosynthesis; thiamine diphosphate biosynthesis.</text>
</comment>
<comment type="subunit">
    <text evidence="1">Homodimer.</text>
</comment>
<comment type="similarity">
    <text evidence="1">Belongs to the ThiC family.</text>
</comment>